<dbReference type="EC" id="2.7.7.3" evidence="1"/>
<dbReference type="EMBL" id="CP000887">
    <property type="protein sequence ID" value="ACD72545.1"/>
    <property type="molecule type" value="Genomic_DNA"/>
</dbReference>
<dbReference type="RefSeq" id="WP_002964224.1">
    <property type="nucleotide sequence ID" value="NC_010742.1"/>
</dbReference>
<dbReference type="SMR" id="B2S5U8"/>
<dbReference type="GeneID" id="93016563"/>
<dbReference type="KEGG" id="bmc:BAbS19_I10380"/>
<dbReference type="HOGENOM" id="CLU_100149_0_1_5"/>
<dbReference type="UniPathway" id="UPA00241">
    <property type="reaction ID" value="UER00355"/>
</dbReference>
<dbReference type="Proteomes" id="UP000002565">
    <property type="component" value="Chromosome 1"/>
</dbReference>
<dbReference type="GO" id="GO:0005737">
    <property type="term" value="C:cytoplasm"/>
    <property type="evidence" value="ECO:0007669"/>
    <property type="project" value="UniProtKB-SubCell"/>
</dbReference>
<dbReference type="GO" id="GO:0005524">
    <property type="term" value="F:ATP binding"/>
    <property type="evidence" value="ECO:0007669"/>
    <property type="project" value="UniProtKB-KW"/>
</dbReference>
<dbReference type="GO" id="GO:0004595">
    <property type="term" value="F:pantetheine-phosphate adenylyltransferase activity"/>
    <property type="evidence" value="ECO:0007669"/>
    <property type="project" value="UniProtKB-UniRule"/>
</dbReference>
<dbReference type="GO" id="GO:0015937">
    <property type="term" value="P:coenzyme A biosynthetic process"/>
    <property type="evidence" value="ECO:0007669"/>
    <property type="project" value="UniProtKB-UniRule"/>
</dbReference>
<dbReference type="CDD" id="cd02163">
    <property type="entry name" value="PPAT"/>
    <property type="match status" value="1"/>
</dbReference>
<dbReference type="Gene3D" id="3.40.50.620">
    <property type="entry name" value="HUPs"/>
    <property type="match status" value="1"/>
</dbReference>
<dbReference type="HAMAP" id="MF_00151">
    <property type="entry name" value="PPAT_bact"/>
    <property type="match status" value="1"/>
</dbReference>
<dbReference type="InterPro" id="IPR004821">
    <property type="entry name" value="Cyt_trans-like"/>
</dbReference>
<dbReference type="InterPro" id="IPR001980">
    <property type="entry name" value="PPAT"/>
</dbReference>
<dbReference type="InterPro" id="IPR014729">
    <property type="entry name" value="Rossmann-like_a/b/a_fold"/>
</dbReference>
<dbReference type="NCBIfam" id="TIGR01510">
    <property type="entry name" value="coaD_prev_kdtB"/>
    <property type="match status" value="1"/>
</dbReference>
<dbReference type="NCBIfam" id="TIGR00125">
    <property type="entry name" value="cyt_tran_rel"/>
    <property type="match status" value="1"/>
</dbReference>
<dbReference type="PANTHER" id="PTHR21342">
    <property type="entry name" value="PHOSPHOPANTETHEINE ADENYLYLTRANSFERASE"/>
    <property type="match status" value="1"/>
</dbReference>
<dbReference type="PANTHER" id="PTHR21342:SF1">
    <property type="entry name" value="PHOSPHOPANTETHEINE ADENYLYLTRANSFERASE"/>
    <property type="match status" value="1"/>
</dbReference>
<dbReference type="Pfam" id="PF01467">
    <property type="entry name" value="CTP_transf_like"/>
    <property type="match status" value="1"/>
</dbReference>
<dbReference type="PRINTS" id="PR01020">
    <property type="entry name" value="LPSBIOSNTHSS"/>
</dbReference>
<dbReference type="SUPFAM" id="SSF52374">
    <property type="entry name" value="Nucleotidylyl transferase"/>
    <property type="match status" value="1"/>
</dbReference>
<organism>
    <name type="scientific">Brucella abortus (strain S19)</name>
    <dbReference type="NCBI Taxonomy" id="430066"/>
    <lineage>
        <taxon>Bacteria</taxon>
        <taxon>Pseudomonadati</taxon>
        <taxon>Pseudomonadota</taxon>
        <taxon>Alphaproteobacteria</taxon>
        <taxon>Hyphomicrobiales</taxon>
        <taxon>Brucellaceae</taxon>
        <taxon>Brucella/Ochrobactrum group</taxon>
        <taxon>Brucella</taxon>
    </lineage>
</organism>
<name>COAD_BRUA1</name>
<evidence type="ECO:0000255" key="1">
    <source>
        <dbReference type="HAMAP-Rule" id="MF_00151"/>
    </source>
</evidence>
<sequence length="164" mass="17399">MTIAIYAGSFDPVTNGHIDVLKGALRLADQVIVAIGMHPGKKPLFSFDERVALIEASAKAVLHKDAARVSVIAFDGLVIDAARKHGAQLMVRGLRDGTDLDYEMQMAGMNGTMAPELQTVFLPADPAVRTITATLVRQIASMGGDIKPFVPVAVAAALNTKFKS</sequence>
<keyword id="KW-0067">ATP-binding</keyword>
<keyword id="KW-0173">Coenzyme A biosynthesis</keyword>
<keyword id="KW-0963">Cytoplasm</keyword>
<keyword id="KW-0460">Magnesium</keyword>
<keyword id="KW-0547">Nucleotide-binding</keyword>
<keyword id="KW-0548">Nucleotidyltransferase</keyword>
<keyword id="KW-0808">Transferase</keyword>
<gene>
    <name evidence="1" type="primary">coaD</name>
    <name type="ordered locus">BAbS19_I10380</name>
</gene>
<reference key="1">
    <citation type="journal article" date="2008" name="PLoS ONE">
        <title>Genome sequence of Brucella abortus vaccine strain S19 compared to virulent strains yields candidate virulence genes.</title>
        <authorList>
            <person name="Crasta O.R."/>
            <person name="Folkerts O."/>
            <person name="Fei Z."/>
            <person name="Mane S.P."/>
            <person name="Evans C."/>
            <person name="Martino-Catt S."/>
            <person name="Bricker B."/>
            <person name="Yu G."/>
            <person name="Du L."/>
            <person name="Sobral B.W."/>
        </authorList>
    </citation>
    <scope>NUCLEOTIDE SEQUENCE [LARGE SCALE GENOMIC DNA]</scope>
    <source>
        <strain>S19</strain>
    </source>
</reference>
<protein>
    <recommendedName>
        <fullName evidence="1">Phosphopantetheine adenylyltransferase</fullName>
        <ecNumber evidence="1">2.7.7.3</ecNumber>
    </recommendedName>
    <alternativeName>
        <fullName evidence="1">Dephospho-CoA pyrophosphorylase</fullName>
    </alternativeName>
    <alternativeName>
        <fullName evidence="1">Pantetheine-phosphate adenylyltransferase</fullName>
        <shortName evidence="1">PPAT</shortName>
    </alternativeName>
</protein>
<accession>B2S5U8</accession>
<comment type="function">
    <text evidence="1">Reversibly transfers an adenylyl group from ATP to 4'-phosphopantetheine, yielding dephospho-CoA (dPCoA) and pyrophosphate.</text>
</comment>
<comment type="catalytic activity">
    <reaction evidence="1">
        <text>(R)-4'-phosphopantetheine + ATP + H(+) = 3'-dephospho-CoA + diphosphate</text>
        <dbReference type="Rhea" id="RHEA:19801"/>
        <dbReference type="ChEBI" id="CHEBI:15378"/>
        <dbReference type="ChEBI" id="CHEBI:30616"/>
        <dbReference type="ChEBI" id="CHEBI:33019"/>
        <dbReference type="ChEBI" id="CHEBI:57328"/>
        <dbReference type="ChEBI" id="CHEBI:61723"/>
        <dbReference type="EC" id="2.7.7.3"/>
    </reaction>
</comment>
<comment type="cofactor">
    <cofactor evidence="1">
        <name>Mg(2+)</name>
        <dbReference type="ChEBI" id="CHEBI:18420"/>
    </cofactor>
</comment>
<comment type="pathway">
    <text evidence="1">Cofactor biosynthesis; coenzyme A biosynthesis; CoA from (R)-pantothenate: step 4/5.</text>
</comment>
<comment type="subunit">
    <text evidence="1">Homohexamer.</text>
</comment>
<comment type="subcellular location">
    <subcellularLocation>
        <location evidence="1">Cytoplasm</location>
    </subcellularLocation>
</comment>
<comment type="similarity">
    <text evidence="1">Belongs to the bacterial CoaD family.</text>
</comment>
<proteinExistence type="inferred from homology"/>
<feature type="chain" id="PRO_1000096769" description="Phosphopantetheine adenylyltransferase">
    <location>
        <begin position="1"/>
        <end position="164"/>
    </location>
</feature>
<feature type="binding site" evidence="1">
    <location>
        <begin position="9"/>
        <end position="10"/>
    </location>
    <ligand>
        <name>ATP</name>
        <dbReference type="ChEBI" id="CHEBI:30616"/>
    </ligand>
</feature>
<feature type="binding site" evidence="1">
    <location>
        <position position="9"/>
    </location>
    <ligand>
        <name>substrate</name>
    </ligand>
</feature>
<feature type="binding site" evidence="1">
    <location>
        <position position="17"/>
    </location>
    <ligand>
        <name>ATP</name>
        <dbReference type="ChEBI" id="CHEBI:30616"/>
    </ligand>
</feature>
<feature type="binding site" evidence="1">
    <location>
        <position position="41"/>
    </location>
    <ligand>
        <name>substrate</name>
    </ligand>
</feature>
<feature type="binding site" evidence="1">
    <location>
        <position position="78"/>
    </location>
    <ligand>
        <name>substrate</name>
    </ligand>
</feature>
<feature type="binding site" evidence="1">
    <location>
        <position position="92"/>
    </location>
    <ligand>
        <name>substrate</name>
    </ligand>
</feature>
<feature type="binding site" evidence="1">
    <location>
        <begin position="93"/>
        <end position="95"/>
    </location>
    <ligand>
        <name>ATP</name>
        <dbReference type="ChEBI" id="CHEBI:30616"/>
    </ligand>
</feature>
<feature type="binding site" evidence="1">
    <location>
        <position position="103"/>
    </location>
    <ligand>
        <name>ATP</name>
        <dbReference type="ChEBI" id="CHEBI:30616"/>
    </ligand>
</feature>
<feature type="binding site" evidence="1">
    <location>
        <begin position="128"/>
        <end position="134"/>
    </location>
    <ligand>
        <name>ATP</name>
        <dbReference type="ChEBI" id="CHEBI:30616"/>
    </ligand>
</feature>
<feature type="site" description="Transition state stabilizer" evidence="1">
    <location>
        <position position="17"/>
    </location>
</feature>